<organism>
    <name type="scientific">Mesoplasma florum (strain ATCC 33453 / NBRC 100688 / NCTC 11704 / L1)</name>
    <name type="common">Acholeplasma florum</name>
    <dbReference type="NCBI Taxonomy" id="265311"/>
    <lineage>
        <taxon>Bacteria</taxon>
        <taxon>Bacillati</taxon>
        <taxon>Mycoplasmatota</taxon>
        <taxon>Mollicutes</taxon>
        <taxon>Entomoplasmatales</taxon>
        <taxon>Entomoplasmataceae</taxon>
        <taxon>Mesoplasma</taxon>
    </lineage>
</organism>
<proteinExistence type="inferred from homology"/>
<accession>Q6F0Y9</accession>
<gene>
    <name evidence="1" type="primary">proS</name>
    <name type="ordered locus">Mfl476</name>
</gene>
<evidence type="ECO:0000255" key="1">
    <source>
        <dbReference type="HAMAP-Rule" id="MF_01571"/>
    </source>
</evidence>
<protein>
    <recommendedName>
        <fullName evidence="1">Proline--tRNA ligase</fullName>
        <ecNumber evidence="1">6.1.1.15</ecNumber>
    </recommendedName>
    <alternativeName>
        <fullName evidence="1">Prolyl-tRNA synthetase</fullName>
        <shortName evidence="1">ProRS</shortName>
    </alternativeName>
</protein>
<keyword id="KW-0030">Aminoacyl-tRNA synthetase</keyword>
<keyword id="KW-0067">ATP-binding</keyword>
<keyword id="KW-0963">Cytoplasm</keyword>
<keyword id="KW-0436">Ligase</keyword>
<keyword id="KW-0547">Nucleotide-binding</keyword>
<keyword id="KW-0648">Protein biosynthesis</keyword>
<keyword id="KW-1185">Reference proteome</keyword>
<reference key="1">
    <citation type="submission" date="2004-06" db="EMBL/GenBank/DDBJ databases">
        <authorList>
            <person name="Birren B.W."/>
            <person name="Stange-Thomann N."/>
            <person name="Hafez N."/>
            <person name="DeCaprio D."/>
            <person name="Fisher S."/>
            <person name="Butler J."/>
            <person name="Elkins T."/>
            <person name="Kodira C.D."/>
            <person name="Major J."/>
            <person name="Wang S."/>
            <person name="Nicol R."/>
            <person name="Nusbaum C."/>
        </authorList>
    </citation>
    <scope>NUCLEOTIDE SEQUENCE [LARGE SCALE GENOMIC DNA]</scope>
    <source>
        <strain>ATCC 33453 / NBRC 100688 / NCTC 11704 / L1</strain>
    </source>
</reference>
<name>SYP_MESFL</name>
<dbReference type="EC" id="6.1.1.15" evidence="1"/>
<dbReference type="EMBL" id="AE017263">
    <property type="protein sequence ID" value="AAT75834.1"/>
    <property type="molecule type" value="Genomic_DNA"/>
</dbReference>
<dbReference type="RefSeq" id="WP_011183374.1">
    <property type="nucleotide sequence ID" value="NC_006055.1"/>
</dbReference>
<dbReference type="RefSeq" id="YP_053718.1">
    <property type="nucleotide sequence ID" value="NC_006055.1"/>
</dbReference>
<dbReference type="SMR" id="Q6F0Y9"/>
<dbReference type="STRING" id="265311.Mfl476"/>
<dbReference type="PaxDb" id="265311-Mfl476"/>
<dbReference type="EnsemblBacteria" id="AAT75834">
    <property type="protein sequence ID" value="AAT75834"/>
    <property type="gene ID" value="Mfl476"/>
</dbReference>
<dbReference type="GeneID" id="2898293"/>
<dbReference type="KEGG" id="mfl:Mfl476"/>
<dbReference type="PATRIC" id="fig|265311.5.peg.482"/>
<dbReference type="eggNOG" id="COG0441">
    <property type="taxonomic scope" value="Bacteria"/>
</dbReference>
<dbReference type="HOGENOM" id="CLU_001882_4_2_14"/>
<dbReference type="OrthoDB" id="9809052at2"/>
<dbReference type="Proteomes" id="UP000006647">
    <property type="component" value="Chromosome"/>
</dbReference>
<dbReference type="GO" id="GO:0017101">
    <property type="term" value="C:aminoacyl-tRNA synthetase multienzyme complex"/>
    <property type="evidence" value="ECO:0007669"/>
    <property type="project" value="TreeGrafter"/>
</dbReference>
<dbReference type="GO" id="GO:0005737">
    <property type="term" value="C:cytoplasm"/>
    <property type="evidence" value="ECO:0007669"/>
    <property type="project" value="UniProtKB-SubCell"/>
</dbReference>
<dbReference type="GO" id="GO:0005524">
    <property type="term" value="F:ATP binding"/>
    <property type="evidence" value="ECO:0007669"/>
    <property type="project" value="UniProtKB-UniRule"/>
</dbReference>
<dbReference type="GO" id="GO:0004827">
    <property type="term" value="F:proline-tRNA ligase activity"/>
    <property type="evidence" value="ECO:0007669"/>
    <property type="project" value="UniProtKB-UniRule"/>
</dbReference>
<dbReference type="GO" id="GO:0006433">
    <property type="term" value="P:prolyl-tRNA aminoacylation"/>
    <property type="evidence" value="ECO:0007669"/>
    <property type="project" value="UniProtKB-UniRule"/>
</dbReference>
<dbReference type="CDD" id="cd00778">
    <property type="entry name" value="ProRS_core_arch_euk"/>
    <property type="match status" value="1"/>
</dbReference>
<dbReference type="FunFam" id="3.30.930.10:FF:000037">
    <property type="entry name" value="Proline--tRNA ligase"/>
    <property type="match status" value="1"/>
</dbReference>
<dbReference type="Gene3D" id="3.40.50.800">
    <property type="entry name" value="Anticodon-binding domain"/>
    <property type="match status" value="1"/>
</dbReference>
<dbReference type="Gene3D" id="3.30.930.10">
    <property type="entry name" value="Bira Bifunctional Protein, Domain 2"/>
    <property type="match status" value="1"/>
</dbReference>
<dbReference type="Gene3D" id="3.30.110.30">
    <property type="entry name" value="C-terminal domain of ProRS"/>
    <property type="match status" value="1"/>
</dbReference>
<dbReference type="HAMAP" id="MF_01571">
    <property type="entry name" value="Pro_tRNA_synth_type3"/>
    <property type="match status" value="1"/>
</dbReference>
<dbReference type="InterPro" id="IPR002314">
    <property type="entry name" value="aa-tRNA-synt_IIb"/>
</dbReference>
<dbReference type="InterPro" id="IPR006195">
    <property type="entry name" value="aa-tRNA-synth_II"/>
</dbReference>
<dbReference type="InterPro" id="IPR045864">
    <property type="entry name" value="aa-tRNA-synth_II/BPL/LPL"/>
</dbReference>
<dbReference type="InterPro" id="IPR004154">
    <property type="entry name" value="Anticodon-bd"/>
</dbReference>
<dbReference type="InterPro" id="IPR036621">
    <property type="entry name" value="Anticodon-bd_dom_sf"/>
</dbReference>
<dbReference type="InterPro" id="IPR002316">
    <property type="entry name" value="Pro-tRNA-ligase_IIa"/>
</dbReference>
<dbReference type="InterPro" id="IPR004499">
    <property type="entry name" value="Pro-tRNA-ligase_IIa_arc-type"/>
</dbReference>
<dbReference type="InterPro" id="IPR016061">
    <property type="entry name" value="Pro-tRNA_ligase_II_C"/>
</dbReference>
<dbReference type="InterPro" id="IPR017449">
    <property type="entry name" value="Pro-tRNA_synth_II"/>
</dbReference>
<dbReference type="InterPro" id="IPR033721">
    <property type="entry name" value="ProRS_core_arch_euk"/>
</dbReference>
<dbReference type="NCBIfam" id="TIGR00408">
    <property type="entry name" value="proS_fam_I"/>
    <property type="match status" value="1"/>
</dbReference>
<dbReference type="PANTHER" id="PTHR43382:SF2">
    <property type="entry name" value="BIFUNCTIONAL GLUTAMATE_PROLINE--TRNA LIGASE"/>
    <property type="match status" value="1"/>
</dbReference>
<dbReference type="PANTHER" id="PTHR43382">
    <property type="entry name" value="PROLYL-TRNA SYNTHETASE"/>
    <property type="match status" value="1"/>
</dbReference>
<dbReference type="Pfam" id="PF03129">
    <property type="entry name" value="HGTP_anticodon"/>
    <property type="match status" value="1"/>
</dbReference>
<dbReference type="Pfam" id="PF09180">
    <property type="entry name" value="ProRS-C_1"/>
    <property type="match status" value="1"/>
</dbReference>
<dbReference type="Pfam" id="PF00587">
    <property type="entry name" value="tRNA-synt_2b"/>
    <property type="match status" value="1"/>
</dbReference>
<dbReference type="PRINTS" id="PR01046">
    <property type="entry name" value="TRNASYNTHPRO"/>
</dbReference>
<dbReference type="SMART" id="SM00946">
    <property type="entry name" value="ProRS-C_1"/>
    <property type="match status" value="1"/>
</dbReference>
<dbReference type="SUPFAM" id="SSF64586">
    <property type="entry name" value="C-terminal domain of ProRS"/>
    <property type="match status" value="1"/>
</dbReference>
<dbReference type="SUPFAM" id="SSF52954">
    <property type="entry name" value="Class II aaRS ABD-related"/>
    <property type="match status" value="1"/>
</dbReference>
<dbReference type="SUPFAM" id="SSF55681">
    <property type="entry name" value="Class II aaRS and biotin synthetases"/>
    <property type="match status" value="1"/>
</dbReference>
<dbReference type="PROSITE" id="PS50862">
    <property type="entry name" value="AA_TRNA_LIGASE_II"/>
    <property type="match status" value="1"/>
</dbReference>
<sequence length="473" mass="54635">MKQLEKITPRDVDFSQWYTDTVINAKLASYGPVKGTIIFRPYGYAIWELIQKYLDAKFKELEVQNVYFPLLIPQSLFQKEKDHIEGFSPEIATVTRVGDTPLPEPLFIRPTSEVLMANFFKNEVKSYRDLPLIFNQWTNVMRWEKTTRPFLRTSEFLWQEGHTVHSERKEASDLTLKILDTYTEFAQNALLLPVIPGKKTEKEKFAGADSTYTIESLMHDGQALQCGTSHYFADNFSKPYEIKFQNKEGKLEHAYSTSWGVSTRLIGAIIMTHSDDNGLVLPSMVSPVQVRLIQIKETDEVIKVTEDIKEALKNKYRVDIDKTDKSFGFKISEAEIKGIPLRIEIGPRDLENNQVTISRRDTREKIQVNVNEVTNIVDQMIKEYDANLYAKALKNREERTSRANSIEEYKNILAQNQGFVLVPFCGEIECEDDVKKQTSTNSRCIPFDQDNKTEKCFNCNKDTTLKVYFARAY</sequence>
<comment type="function">
    <text evidence="1">Catalyzes the attachment of proline to tRNA(Pro) in a two-step reaction: proline is first activated by ATP to form Pro-AMP and then transferred to the acceptor end of tRNA(Pro).</text>
</comment>
<comment type="catalytic activity">
    <reaction evidence="1">
        <text>tRNA(Pro) + L-proline + ATP = L-prolyl-tRNA(Pro) + AMP + diphosphate</text>
        <dbReference type="Rhea" id="RHEA:14305"/>
        <dbReference type="Rhea" id="RHEA-COMP:9700"/>
        <dbReference type="Rhea" id="RHEA-COMP:9702"/>
        <dbReference type="ChEBI" id="CHEBI:30616"/>
        <dbReference type="ChEBI" id="CHEBI:33019"/>
        <dbReference type="ChEBI" id="CHEBI:60039"/>
        <dbReference type="ChEBI" id="CHEBI:78442"/>
        <dbReference type="ChEBI" id="CHEBI:78532"/>
        <dbReference type="ChEBI" id="CHEBI:456215"/>
        <dbReference type="EC" id="6.1.1.15"/>
    </reaction>
</comment>
<comment type="subunit">
    <text evidence="1">Homodimer.</text>
</comment>
<comment type="subcellular location">
    <subcellularLocation>
        <location evidence="1">Cytoplasm</location>
    </subcellularLocation>
</comment>
<comment type="domain">
    <text evidence="1">Consists of three domains: the N-terminal catalytic domain, the anticodon-binding domain and the C-terminal extension.</text>
</comment>
<comment type="similarity">
    <text evidence="1">Belongs to the class-II aminoacyl-tRNA synthetase family. ProS type 3 subfamily.</text>
</comment>
<feature type="chain" id="PRO_0000249131" description="Proline--tRNA ligase">
    <location>
        <begin position="1"/>
        <end position="473"/>
    </location>
</feature>